<feature type="chain" id="PRO_0000420766" description="Antitoxin LsoB">
    <location>
        <begin position="1"/>
        <end position="126"/>
    </location>
</feature>
<protein>
    <recommendedName>
        <fullName>Antitoxin LsoB</fullName>
    </recommendedName>
</protein>
<keyword id="KW-0614">Plasmid</keyword>
<keyword id="KW-1185">Reference proteome</keyword>
<keyword id="KW-1277">Toxin-antitoxin system</keyword>
<dbReference type="EMBL" id="AB011548">
    <property type="protein sequence ID" value="BAA31755.1"/>
    <property type="molecule type" value="Genomic_DNA"/>
</dbReference>
<dbReference type="RefSeq" id="NP_052605.1">
    <property type="nucleotide sequence ID" value="NC_002127.1"/>
</dbReference>
<dbReference type="RefSeq" id="WP_000710826.1">
    <property type="nucleotide sequence ID" value="NZ_RWJR01000070.1"/>
</dbReference>
<dbReference type="SMR" id="Q7DKW4"/>
<dbReference type="KEGG" id="ecs:pOSAK1_02"/>
<dbReference type="PATRIC" id="fig|386585.9.peg.2"/>
<dbReference type="HOGENOM" id="CLU_1978139_0_0_6"/>
<dbReference type="Proteomes" id="UP000000558">
    <property type="component" value="Plasmid pOSAK1"/>
</dbReference>
<dbReference type="InterPro" id="IPR031834">
    <property type="entry name" value="RnlB/LsoB_antitoxin"/>
</dbReference>
<dbReference type="Pfam" id="PF15933">
    <property type="entry name" value="RnlB_antitoxin"/>
    <property type="match status" value="1"/>
</dbReference>
<evidence type="ECO:0000269" key="1">
    <source>
    </source>
</evidence>
<comment type="function">
    <text evidence="1">Antitoxin component of a type II toxin-antitoxin (TA) system. A labile antitoxin (half-life of 5.9 minutes) that inhibits the endonuclease activity of cognate toxin LsoA but not that of non-cognate toxin RnlA.</text>
</comment>
<comment type="subunit">
    <text>Can form a complex with cognate toxin LsoA.</text>
</comment>
<comment type="miscellaneous">
    <text>This plasmid is only found in Sakai-derived strains of E.coli O157.</text>
</comment>
<organism>
    <name type="scientific">Escherichia coli O157:H7</name>
    <dbReference type="NCBI Taxonomy" id="83334"/>
    <lineage>
        <taxon>Bacteria</taxon>
        <taxon>Pseudomonadati</taxon>
        <taxon>Pseudomonadota</taxon>
        <taxon>Gammaproteobacteria</taxon>
        <taxon>Enterobacterales</taxon>
        <taxon>Enterobacteriaceae</taxon>
        <taxon>Escherichia</taxon>
    </lineage>
</organism>
<gene>
    <name type="primary">lsoB</name>
</gene>
<accession>Q7DKW4</accession>
<name>LSOB_ECO57</name>
<geneLocation type="plasmid">
    <name>pOSAK1</name>
</geneLocation>
<sequence>MKKDKKYQIEAIKNKDKTLFIVYATDIYSPSEFFSKIESDLKKKKSKGDVFFDLIIPNGGKKDRYVYTSFNGEKFSSYTLNKVTKTDEYNDLSELSASFFKKNFDKINVNLLSKATSFALKKGIPI</sequence>
<proteinExistence type="evidence at protein level"/>
<reference key="1">
    <citation type="journal article" date="1998" name="DNA Res.">
        <title>Complete nucleotide sequences of 93-kb and 3.3-kb plasmids of an enterohemorrhagic Escherichia coli O157:H7 derived from Sakai outbreak.</title>
        <authorList>
            <person name="Makino K."/>
            <person name="Ishii K."/>
            <person name="Yasunaga T."/>
            <person name="Hattori M."/>
            <person name="Yokoyama K."/>
            <person name="Yatsudo H.C."/>
            <person name="Kubota Y."/>
            <person name="Yamaichi Y."/>
            <person name="Iida T."/>
            <person name="Yamamoto K."/>
            <person name="Honda T."/>
            <person name="Han C.G."/>
            <person name="Ohtsubo A."/>
            <person name="Kasamatsu M."/>
            <person name="Hayashi T."/>
            <person name="Kuhara S."/>
            <person name="Shinagawa H."/>
        </authorList>
    </citation>
    <scope>NUCLEOTIDE SEQUENCE [LARGE SCALE GENOMIC DNA]</scope>
    <source>
        <strain>O157:H7 / Sakai / RIMD 0509952 / EHEC</strain>
    </source>
</reference>
<reference key="2">
    <citation type="journal article" date="2012" name="Mol. Microbiol.">
        <title>Dmd of bacteriophage T4 functions as an antitoxin against Escherichia coli LsoA and RnlA toxins.</title>
        <authorList>
            <person name="Otsuka Y."/>
            <person name="Yonesaki T."/>
        </authorList>
    </citation>
    <scope>FUNCTION AS AN ANTITOXIN</scope>
    <scope>INTERACTION WITH LSOA</scope>
    <source>
        <strain>O157:H7 / Sakai / RIMD 0509952 / EHEC</strain>
    </source>
</reference>